<keyword id="KW-0963">Cytoplasm</keyword>
<keyword id="KW-1185">Reference proteome</keyword>
<keyword id="KW-0862">Zinc</keyword>
<dbReference type="EMBL" id="AE016818">
    <property type="protein sequence ID" value="AAS53115.1"/>
    <property type="molecule type" value="Genomic_DNA"/>
</dbReference>
<dbReference type="RefSeq" id="NP_985291.1">
    <property type="nucleotide sequence ID" value="NM_210645.1"/>
</dbReference>
<dbReference type="FunCoup" id="Q755T2">
    <property type="interactions" value="65"/>
</dbReference>
<dbReference type="EnsemblFungi" id="AAS53115">
    <property type="protein sequence ID" value="AAS53115"/>
    <property type="gene ID" value="AGOS_AER436C"/>
</dbReference>
<dbReference type="GeneID" id="4621511"/>
<dbReference type="KEGG" id="ago:AGOS_AER436C"/>
<dbReference type="eggNOG" id="ENOG502QSM8">
    <property type="taxonomic scope" value="Eukaryota"/>
</dbReference>
<dbReference type="HOGENOM" id="CLU_301677_0_0_1"/>
<dbReference type="InParanoid" id="Q755T2"/>
<dbReference type="OMA" id="QSLKYHD"/>
<dbReference type="OrthoDB" id="3973129at2759"/>
<dbReference type="Proteomes" id="UP000000591">
    <property type="component" value="Chromosome V"/>
</dbReference>
<dbReference type="GO" id="GO:0005935">
    <property type="term" value="C:cellular bud neck"/>
    <property type="evidence" value="ECO:0007669"/>
    <property type="project" value="UniProtKB-SubCell"/>
</dbReference>
<dbReference type="GO" id="GO:0005934">
    <property type="term" value="C:cellular bud tip"/>
    <property type="evidence" value="ECO:0007669"/>
    <property type="project" value="UniProtKB-SubCell"/>
</dbReference>
<dbReference type="GO" id="GO:0005737">
    <property type="term" value="C:cytoplasm"/>
    <property type="evidence" value="ECO:0007669"/>
    <property type="project" value="UniProtKB-SubCell"/>
</dbReference>
<name>ZRG8_EREGS</name>
<protein>
    <recommendedName>
        <fullName>Zinc-regulated protein 8</fullName>
    </recommendedName>
</protein>
<comment type="function">
    <text evidence="1">Involved in maintenance of polarized growth and daughter-cell-specific transcription.</text>
</comment>
<comment type="subcellular location">
    <subcellularLocation>
        <location evidence="1">Cytoplasm</location>
    </subcellularLocation>
    <subcellularLocation>
        <location evidence="1">Bud</location>
    </subcellularLocation>
    <subcellularLocation>
        <location evidence="1">Bud neck</location>
    </subcellularLocation>
    <subcellularLocation>
        <location evidence="1">Bud tip</location>
    </subcellularLocation>
</comment>
<comment type="similarity">
    <text evidence="3">Belongs to the ZRG8 family.</text>
</comment>
<accession>Q755T2</accession>
<feature type="chain" id="PRO_0000333502" description="Zinc-regulated protein 8">
    <location>
        <begin position="1"/>
        <end position="991"/>
    </location>
</feature>
<feature type="region of interest" description="Disordered" evidence="2">
    <location>
        <begin position="1"/>
        <end position="51"/>
    </location>
</feature>
<feature type="region of interest" description="Disordered" evidence="2">
    <location>
        <begin position="68"/>
        <end position="92"/>
    </location>
</feature>
<feature type="region of interest" description="Disordered" evidence="2">
    <location>
        <begin position="165"/>
        <end position="192"/>
    </location>
</feature>
<feature type="region of interest" description="Disordered" evidence="2">
    <location>
        <begin position="306"/>
        <end position="327"/>
    </location>
</feature>
<feature type="region of interest" description="Disordered" evidence="2">
    <location>
        <begin position="516"/>
        <end position="546"/>
    </location>
</feature>
<feature type="region of interest" description="Disordered" evidence="2">
    <location>
        <begin position="564"/>
        <end position="588"/>
    </location>
</feature>
<feature type="region of interest" description="Disordered" evidence="2">
    <location>
        <begin position="603"/>
        <end position="631"/>
    </location>
</feature>
<feature type="region of interest" description="Disordered" evidence="2">
    <location>
        <begin position="847"/>
        <end position="866"/>
    </location>
</feature>
<feature type="compositionally biased region" description="Basic residues" evidence="2">
    <location>
        <begin position="1"/>
        <end position="11"/>
    </location>
</feature>
<feature type="compositionally biased region" description="Polar residues" evidence="2">
    <location>
        <begin position="24"/>
        <end position="33"/>
    </location>
</feature>
<feature type="compositionally biased region" description="Acidic residues" evidence="2">
    <location>
        <begin position="605"/>
        <end position="614"/>
    </location>
</feature>
<proteinExistence type="inferred from homology"/>
<sequence length="991" mass="109062">MRTFIKSHRRSSSLEACPPKTTPKRNSTGSPTELQPPVFPPSAPRQSSSFESLQKLTSGKLFSTKLFKKSGAQKLPATPDLPAFPRGYDSRSPSCEWRALGTEVALEDIPAIKGTRTHEWGENSDVSNSVIVLNRNSISSDGSYVETRDEQSPWRLARRSLDSATQTLSSTEEYSGPEIRIRSSTPHKLREASDSFLKKRWNRQARIHSKADIAKLEGSFPMPVEAISPPFARRRSSERSQCLGASGTMEQQLNPVNPEKCSLYAACSERSQSLTKATHALVATASTEVGLQNNLNSASVELRDDLENERESLSEEDSGSSFSDDSSKFSFEVGGGINGRTSSVKYYSKPDPPMRNYIDDLFEDEDFDEDMNCYDDDQEYEEDTEHLFGASHVQLEHGYSMMHEVTDSDSEQETKSNISSVLSKGQNAIFPSSDGRFVLNSGDSNGGSNQENIGVKMLEKSISNIGLEDVEDVEDDSDGIIPTDTQEDIDSPVHSQPSHANFSHIKKYSDIFGISDSDEDTANNSSSQYPFEEGYYSSDEEPTLRAEPAANTEDGFTDALKASFKQDESSHSSTDSIDKTPTFALDTDGEYFPPTLTLNKKSEVDDLDVSEEAAPESISLSTSDLEQPADAKQDRANIISSSIMDYAIHEVATTESVESDENQTTCVPQTTRVPSKVTKYADLFNLSDENDEDGSDGEFLDDMGFNELESTPVESKKPNIPPRRLGNEYFGNFHSPVASSHNAPAVPRQHSPLSAKVILPATENTSIKSQYAVPRMGQSPLPPPARSQTLKFHDLHSSLDGEIRGTMSNLFFIDESEEDQYYQVQSKVDDDYLDEINNVPEDFNFSDNDSDTCSGKSPMFPTGLRNSFRKTRSFSEKPTGLAKEPTPTRYKLDIKNKTVTFFKNGLSRPLSEGSLHGQSIPSRAHVPPLSLRKAMSEGSLEQSAHSPLGYGSLAFGLNSLKSPEMSRTDAYGLSPIQEAISSGDASPKLVN</sequence>
<reference key="1">
    <citation type="journal article" date="2004" name="Science">
        <title>The Ashbya gossypii genome as a tool for mapping the ancient Saccharomyces cerevisiae genome.</title>
        <authorList>
            <person name="Dietrich F.S."/>
            <person name="Voegeli S."/>
            <person name="Brachat S."/>
            <person name="Lerch A."/>
            <person name="Gates K."/>
            <person name="Steiner S."/>
            <person name="Mohr C."/>
            <person name="Poehlmann R."/>
            <person name="Luedi P."/>
            <person name="Choi S."/>
            <person name="Wing R.A."/>
            <person name="Flavier A."/>
            <person name="Gaffney T.D."/>
            <person name="Philippsen P."/>
        </authorList>
    </citation>
    <scope>NUCLEOTIDE SEQUENCE [LARGE SCALE GENOMIC DNA]</scope>
    <source>
        <strain>ATCC 10895 / CBS 109.51 / FGSC 9923 / NRRL Y-1056</strain>
    </source>
</reference>
<reference key="2">
    <citation type="journal article" date="2013" name="G3 (Bethesda)">
        <title>Genomes of Ashbya fungi isolated from insects reveal four mating-type loci, numerous translocations, lack of transposons, and distinct gene duplications.</title>
        <authorList>
            <person name="Dietrich F.S."/>
            <person name="Voegeli S."/>
            <person name="Kuo S."/>
            <person name="Philippsen P."/>
        </authorList>
    </citation>
    <scope>GENOME REANNOTATION</scope>
    <source>
        <strain>ATCC 10895 / CBS 109.51 / FGSC 9923 / NRRL Y-1056</strain>
    </source>
</reference>
<organism>
    <name type="scientific">Eremothecium gossypii (strain ATCC 10895 / CBS 109.51 / FGSC 9923 / NRRL Y-1056)</name>
    <name type="common">Yeast</name>
    <name type="synonym">Ashbya gossypii</name>
    <dbReference type="NCBI Taxonomy" id="284811"/>
    <lineage>
        <taxon>Eukaryota</taxon>
        <taxon>Fungi</taxon>
        <taxon>Dikarya</taxon>
        <taxon>Ascomycota</taxon>
        <taxon>Saccharomycotina</taxon>
        <taxon>Saccharomycetes</taxon>
        <taxon>Saccharomycetales</taxon>
        <taxon>Saccharomycetaceae</taxon>
        <taxon>Eremothecium</taxon>
    </lineage>
</organism>
<gene>
    <name type="primary">ZRG8</name>
    <name type="ordered locus">AER436C</name>
</gene>
<evidence type="ECO:0000250" key="1"/>
<evidence type="ECO:0000256" key="2">
    <source>
        <dbReference type="SAM" id="MobiDB-lite"/>
    </source>
</evidence>
<evidence type="ECO:0000305" key="3"/>